<sequence>MPTRRGCSGPCHFLASAFVLLLLPALNQSVVLPSTVPRAVQESKPLEPGPRTLSPLPPGPTAAQPRGQAQSEGAGPRGAESRNGSIPGAASEADGPEGKAGESSLGGSLAVSPNPSDKPMTQRALTVLVVVSAAVLVYFVVRTVRMRRRNRKTRRYGVLDTNIENMELTPLEQDDEDDDNTLFDANHPRR</sequence>
<name>F174A_RAT</name>
<dbReference type="EMBL" id="BC089835">
    <property type="protein sequence ID" value="AAH89835.1"/>
    <property type="molecule type" value="mRNA"/>
</dbReference>
<dbReference type="RefSeq" id="NP_001012350.1">
    <property type="nucleotide sequence ID" value="NM_001012350.1"/>
</dbReference>
<dbReference type="RefSeq" id="XP_006245641.1">
    <property type="nucleotide sequence ID" value="XM_006245579.5"/>
</dbReference>
<dbReference type="SMR" id="Q5FVQ7"/>
<dbReference type="FunCoup" id="Q5FVQ7">
    <property type="interactions" value="368"/>
</dbReference>
<dbReference type="STRING" id="10116.ENSRNOP00000073621"/>
<dbReference type="GlyCosmos" id="Q5FVQ7">
    <property type="glycosylation" value="2 sites, No reported glycans"/>
</dbReference>
<dbReference type="GlyGen" id="Q5FVQ7">
    <property type="glycosylation" value="3 sites"/>
</dbReference>
<dbReference type="PhosphoSitePlus" id="Q5FVQ7"/>
<dbReference type="PaxDb" id="10116-ENSRNOP00000046794"/>
<dbReference type="Ensembl" id="ENSRNOT00000050494.6">
    <property type="protein sequence ID" value="ENSRNOP00000046794.3"/>
    <property type="gene ID" value="ENSRNOG00000019087.8"/>
</dbReference>
<dbReference type="Ensembl" id="ENSRNOT00000080129.2">
    <property type="protein sequence ID" value="ENSRNOP00000073621.2"/>
    <property type="gene ID" value="ENSRNOG00000019087.8"/>
</dbReference>
<dbReference type="GeneID" id="301634"/>
<dbReference type="KEGG" id="rno:301634"/>
<dbReference type="AGR" id="RGD:1309973"/>
<dbReference type="CTD" id="345757"/>
<dbReference type="RGD" id="1309973">
    <property type="gene designation" value="Fam174a"/>
</dbReference>
<dbReference type="eggNOG" id="ENOG502S4HB">
    <property type="taxonomic scope" value="Eukaryota"/>
</dbReference>
<dbReference type="GeneTree" id="ENSGT00730000111385"/>
<dbReference type="InParanoid" id="Q5FVQ7"/>
<dbReference type="OMA" id="KAPHCCC"/>
<dbReference type="OrthoDB" id="5917722at2759"/>
<dbReference type="PhylomeDB" id="Q5FVQ7"/>
<dbReference type="TreeFam" id="TF105425"/>
<dbReference type="PRO" id="PR:Q5FVQ7"/>
<dbReference type="Proteomes" id="UP000002494">
    <property type="component" value="Chromosome 9"/>
</dbReference>
<dbReference type="Bgee" id="ENSRNOG00000019087">
    <property type="expression patterns" value="Expressed in quadriceps femoris and 20 other cell types or tissues"/>
</dbReference>
<dbReference type="ExpressionAtlas" id="Q5FVQ7">
    <property type="expression patterns" value="baseline and differential"/>
</dbReference>
<dbReference type="GO" id="GO:0016020">
    <property type="term" value="C:membrane"/>
    <property type="evidence" value="ECO:0007669"/>
    <property type="project" value="UniProtKB-SubCell"/>
</dbReference>
<dbReference type="InterPro" id="IPR009565">
    <property type="entry name" value="FAM174-like"/>
</dbReference>
<dbReference type="PANTHER" id="PTHR28607">
    <property type="entry name" value="EXPRESSED PROTEIN"/>
    <property type="match status" value="1"/>
</dbReference>
<dbReference type="PANTHER" id="PTHR28607:SF1">
    <property type="entry name" value="MEMBRANE PROTEIN FAM174A"/>
    <property type="match status" value="1"/>
</dbReference>
<dbReference type="Pfam" id="PF06679">
    <property type="entry name" value="DUF1180"/>
    <property type="match status" value="1"/>
</dbReference>
<keyword id="KW-0325">Glycoprotein</keyword>
<keyword id="KW-0472">Membrane</keyword>
<keyword id="KW-1185">Reference proteome</keyword>
<keyword id="KW-0732">Signal</keyword>
<keyword id="KW-0812">Transmembrane</keyword>
<keyword id="KW-1133">Transmembrane helix</keyword>
<proteinExistence type="evidence at transcript level"/>
<evidence type="ECO:0000255" key="1"/>
<evidence type="ECO:0000256" key="2">
    <source>
        <dbReference type="SAM" id="MobiDB-lite"/>
    </source>
</evidence>
<evidence type="ECO:0000305" key="3"/>
<protein>
    <recommendedName>
        <fullName>Membrane protein FAM174A</fullName>
    </recommendedName>
    <alternativeName>
        <fullName>Transmembrane protein 157</fullName>
    </alternativeName>
</protein>
<accession>Q5FVQ7</accession>
<organism>
    <name type="scientific">Rattus norvegicus</name>
    <name type="common">Rat</name>
    <dbReference type="NCBI Taxonomy" id="10116"/>
    <lineage>
        <taxon>Eukaryota</taxon>
        <taxon>Metazoa</taxon>
        <taxon>Chordata</taxon>
        <taxon>Craniata</taxon>
        <taxon>Vertebrata</taxon>
        <taxon>Euteleostomi</taxon>
        <taxon>Mammalia</taxon>
        <taxon>Eutheria</taxon>
        <taxon>Euarchontoglires</taxon>
        <taxon>Glires</taxon>
        <taxon>Rodentia</taxon>
        <taxon>Myomorpha</taxon>
        <taxon>Muroidea</taxon>
        <taxon>Muridae</taxon>
        <taxon>Murinae</taxon>
        <taxon>Rattus</taxon>
    </lineage>
</organism>
<gene>
    <name type="primary">Fam174a</name>
    <name type="synonym">Tmem157</name>
</gene>
<feature type="signal peptide" evidence="1">
    <location>
        <begin position="1"/>
        <end position="29"/>
    </location>
</feature>
<feature type="chain" id="PRO_0000263652" description="Membrane protein FAM174A">
    <location>
        <begin position="30"/>
        <end position="190"/>
    </location>
</feature>
<feature type="topological domain" description="Extracellular" evidence="1">
    <location>
        <begin position="30"/>
        <end position="123"/>
    </location>
</feature>
<feature type="transmembrane region" description="Helical" evidence="1">
    <location>
        <begin position="124"/>
        <end position="144"/>
    </location>
</feature>
<feature type="topological domain" description="Cytoplasmic" evidence="1">
    <location>
        <begin position="145"/>
        <end position="190"/>
    </location>
</feature>
<feature type="region of interest" description="Disordered" evidence="2">
    <location>
        <begin position="37"/>
        <end position="119"/>
    </location>
</feature>
<feature type="region of interest" description="Disordered" evidence="2">
    <location>
        <begin position="168"/>
        <end position="190"/>
    </location>
</feature>
<feature type="compositionally biased region" description="Acidic residues" evidence="2">
    <location>
        <begin position="172"/>
        <end position="181"/>
    </location>
</feature>
<feature type="glycosylation site" description="N-linked (GlcNAc...) asparagine" evidence="1">
    <location>
        <position position="27"/>
    </location>
</feature>
<feature type="glycosylation site" description="N-linked (GlcNAc...) asparagine" evidence="1">
    <location>
        <position position="83"/>
    </location>
</feature>
<reference key="1">
    <citation type="journal article" date="2004" name="Genome Res.">
        <title>The status, quality, and expansion of the NIH full-length cDNA project: the Mammalian Gene Collection (MGC).</title>
        <authorList>
            <consortium name="The MGC Project Team"/>
        </authorList>
    </citation>
    <scope>NUCLEOTIDE SEQUENCE [LARGE SCALE MRNA]</scope>
    <source>
        <tissue>Liver</tissue>
    </source>
</reference>
<comment type="subcellular location">
    <subcellularLocation>
        <location evidence="3">Membrane</location>
        <topology evidence="3">Single-pass type I membrane protein</topology>
    </subcellularLocation>
</comment>
<comment type="similarity">
    <text evidence="3">Belongs to the FAM174 family.</text>
</comment>